<accession>Q8K9B2</accession>
<sequence>MKILNLIQPGVVTGNECQIIFELAKKKKFAIPAVNCIGTDSINAVLETASRVKSPVIIQFSYGGASFIAGYKRTSSKNPEDQAIQGSISGAQHVHLMSQYYQIPVILHTDHCSKEMLPWIDGLLEEGKKHYKNFGKPLFTSHMIDLSKEHLKENIAICSNYLKKIKKINMILEIELGCTGGEEDGIDNSNIDKKLLYTQPKDVNYAYKKLSKISTNFTIAASFGNVHGVYQPGNVNLKPNILKESQEYVSTKHNLKKLPLNLVFHGGSGSDLKEIHESIEYGIVKMNIDTDIQWASWKGVFNFYKKNKDFLQKQIGNKNGKNIPNKKYYDPRSWIRESQESMSKRLEKTFKDLNAFNIL</sequence>
<feature type="chain" id="PRO_0000178709" description="Fructose-bisphosphate aldolase class 2">
    <location>
        <begin position="1"/>
        <end position="359"/>
    </location>
</feature>
<feature type="active site" description="Proton donor" evidence="1">
    <location>
        <position position="110"/>
    </location>
</feature>
<feature type="binding site" evidence="1">
    <location>
        <position position="61"/>
    </location>
    <ligand>
        <name>D-glyceraldehyde 3-phosphate</name>
        <dbReference type="ChEBI" id="CHEBI:59776"/>
    </ligand>
</feature>
<feature type="binding site" evidence="1">
    <location>
        <position position="111"/>
    </location>
    <ligand>
        <name>Zn(2+)</name>
        <dbReference type="ChEBI" id="CHEBI:29105"/>
        <label>1</label>
        <note>catalytic</note>
    </ligand>
</feature>
<feature type="binding site" evidence="1">
    <location>
        <position position="145"/>
    </location>
    <ligand>
        <name>Zn(2+)</name>
        <dbReference type="ChEBI" id="CHEBI:29105"/>
        <label>2</label>
    </ligand>
</feature>
<feature type="binding site" evidence="1">
    <location>
        <position position="175"/>
    </location>
    <ligand>
        <name>Zn(2+)</name>
        <dbReference type="ChEBI" id="CHEBI:29105"/>
        <label>2</label>
    </ligand>
</feature>
<feature type="binding site" evidence="1">
    <location>
        <position position="227"/>
    </location>
    <ligand>
        <name>Zn(2+)</name>
        <dbReference type="ChEBI" id="CHEBI:29105"/>
        <label>1</label>
        <note>catalytic</note>
    </ligand>
</feature>
<feature type="binding site" evidence="1">
    <location>
        <position position="228"/>
    </location>
    <ligand>
        <name>dihydroxyacetone phosphate</name>
        <dbReference type="ChEBI" id="CHEBI:57642"/>
    </ligand>
</feature>
<feature type="binding site" evidence="1">
    <location>
        <position position="265"/>
    </location>
    <ligand>
        <name>Zn(2+)</name>
        <dbReference type="ChEBI" id="CHEBI:29105"/>
        <label>1</label>
        <note>catalytic</note>
    </ligand>
</feature>
<feature type="binding site" evidence="1">
    <location>
        <begin position="266"/>
        <end position="268"/>
    </location>
    <ligand>
        <name>dihydroxyacetone phosphate</name>
        <dbReference type="ChEBI" id="CHEBI:57642"/>
    </ligand>
</feature>
<feature type="binding site" evidence="1">
    <location>
        <begin position="287"/>
        <end position="290"/>
    </location>
    <ligand>
        <name>dihydroxyacetone phosphate</name>
        <dbReference type="ChEBI" id="CHEBI:57642"/>
    </ligand>
</feature>
<proteinExistence type="inferred from homology"/>
<reference key="1">
    <citation type="journal article" date="2002" name="Science">
        <title>50 million years of genomic stasis in endosymbiotic bacteria.</title>
        <authorList>
            <person name="Tamas I."/>
            <person name="Klasson L."/>
            <person name="Canbaeck B."/>
            <person name="Naeslund A.K."/>
            <person name="Eriksson A.-S."/>
            <person name="Wernegreen J.J."/>
            <person name="Sandstroem J.P."/>
            <person name="Moran N.A."/>
            <person name="Andersson S.G.E."/>
        </authorList>
    </citation>
    <scope>NUCLEOTIDE SEQUENCE [LARGE SCALE GENOMIC DNA]</scope>
    <source>
        <strain>Sg</strain>
    </source>
</reference>
<name>ALF_BUCAP</name>
<comment type="function">
    <text evidence="1">Catalyzes the aldol condensation of dihydroxyacetone phosphate (DHAP or glycerone-phosphate) with glyceraldehyde 3-phosphate (G3P) to form fructose 1,6-bisphosphate (FBP) in gluconeogenesis and the reverse reaction in glycolysis.</text>
</comment>
<comment type="catalytic activity">
    <reaction>
        <text>beta-D-fructose 1,6-bisphosphate = D-glyceraldehyde 3-phosphate + dihydroxyacetone phosphate</text>
        <dbReference type="Rhea" id="RHEA:14729"/>
        <dbReference type="ChEBI" id="CHEBI:32966"/>
        <dbReference type="ChEBI" id="CHEBI:57642"/>
        <dbReference type="ChEBI" id="CHEBI:59776"/>
        <dbReference type="EC" id="4.1.2.13"/>
    </reaction>
</comment>
<comment type="cofactor">
    <cofactor evidence="1">
        <name>Zn(2+)</name>
        <dbReference type="ChEBI" id="CHEBI:29105"/>
    </cofactor>
    <text evidence="1">Binds 2 Zn(2+) ions per subunit. One is catalytic and the other provides a structural contribution.</text>
</comment>
<comment type="pathway">
    <text>Carbohydrate degradation; glycolysis; D-glyceraldehyde 3-phosphate and glycerone phosphate from D-glucose: step 4/4.</text>
</comment>
<comment type="similarity">
    <text evidence="2">Belongs to the class II fructose-bisphosphate aldolase family.</text>
</comment>
<gene>
    <name type="primary">fbaA</name>
    <name type="synonym">fba</name>
    <name type="ordered locus">BUsg_436</name>
</gene>
<evidence type="ECO:0000250" key="1"/>
<evidence type="ECO:0000305" key="2"/>
<organism>
    <name type="scientific">Buchnera aphidicola subsp. Schizaphis graminum (strain Sg)</name>
    <dbReference type="NCBI Taxonomy" id="198804"/>
    <lineage>
        <taxon>Bacteria</taxon>
        <taxon>Pseudomonadati</taxon>
        <taxon>Pseudomonadota</taxon>
        <taxon>Gammaproteobacteria</taxon>
        <taxon>Enterobacterales</taxon>
        <taxon>Erwiniaceae</taxon>
        <taxon>Buchnera</taxon>
    </lineage>
</organism>
<dbReference type="EC" id="4.1.2.13"/>
<dbReference type="EMBL" id="AE013218">
    <property type="protein sequence ID" value="AAM67979.1"/>
    <property type="molecule type" value="Genomic_DNA"/>
</dbReference>
<dbReference type="RefSeq" id="WP_011053946.1">
    <property type="nucleotide sequence ID" value="NC_004061.1"/>
</dbReference>
<dbReference type="SMR" id="Q8K9B2"/>
<dbReference type="STRING" id="198804.BUsg_436"/>
<dbReference type="GeneID" id="93003908"/>
<dbReference type="KEGG" id="bas:BUsg_436"/>
<dbReference type="eggNOG" id="COG0191">
    <property type="taxonomic scope" value="Bacteria"/>
</dbReference>
<dbReference type="HOGENOM" id="CLU_036923_0_0_6"/>
<dbReference type="UniPathway" id="UPA00109">
    <property type="reaction ID" value="UER00183"/>
</dbReference>
<dbReference type="Proteomes" id="UP000000416">
    <property type="component" value="Chromosome"/>
</dbReference>
<dbReference type="GO" id="GO:0005829">
    <property type="term" value="C:cytosol"/>
    <property type="evidence" value="ECO:0007669"/>
    <property type="project" value="TreeGrafter"/>
</dbReference>
<dbReference type="GO" id="GO:0004332">
    <property type="term" value="F:fructose-bisphosphate aldolase activity"/>
    <property type="evidence" value="ECO:0007669"/>
    <property type="project" value="UniProtKB-EC"/>
</dbReference>
<dbReference type="GO" id="GO:0008270">
    <property type="term" value="F:zinc ion binding"/>
    <property type="evidence" value="ECO:0007669"/>
    <property type="project" value="InterPro"/>
</dbReference>
<dbReference type="GO" id="GO:0006094">
    <property type="term" value="P:gluconeogenesis"/>
    <property type="evidence" value="ECO:0007669"/>
    <property type="project" value="TreeGrafter"/>
</dbReference>
<dbReference type="GO" id="GO:0006096">
    <property type="term" value="P:glycolytic process"/>
    <property type="evidence" value="ECO:0007669"/>
    <property type="project" value="UniProtKB-UniPathway"/>
</dbReference>
<dbReference type="CDD" id="cd00946">
    <property type="entry name" value="FBP_aldolase_IIA"/>
    <property type="match status" value="1"/>
</dbReference>
<dbReference type="FunFam" id="3.20.20.70:FF:000013">
    <property type="entry name" value="Class II fructose-bisphosphate aldolase"/>
    <property type="match status" value="1"/>
</dbReference>
<dbReference type="Gene3D" id="3.20.20.70">
    <property type="entry name" value="Aldolase class I"/>
    <property type="match status" value="1"/>
</dbReference>
<dbReference type="InterPro" id="IPR013785">
    <property type="entry name" value="Aldolase_TIM"/>
</dbReference>
<dbReference type="InterPro" id="IPR000771">
    <property type="entry name" value="FBA_II"/>
</dbReference>
<dbReference type="InterPro" id="IPR006411">
    <property type="entry name" value="Fruct_bisP_bact"/>
</dbReference>
<dbReference type="NCBIfam" id="TIGR00167">
    <property type="entry name" value="cbbA"/>
    <property type="match status" value="1"/>
</dbReference>
<dbReference type="NCBIfam" id="TIGR01520">
    <property type="entry name" value="FruBisAldo_II_A"/>
    <property type="match status" value="1"/>
</dbReference>
<dbReference type="NCBIfam" id="NF006628">
    <property type="entry name" value="PRK09197.1"/>
    <property type="match status" value="1"/>
</dbReference>
<dbReference type="PANTHER" id="PTHR30559:SF0">
    <property type="entry name" value="FRUCTOSE-BISPHOSPHATE ALDOLASE"/>
    <property type="match status" value="1"/>
</dbReference>
<dbReference type="PANTHER" id="PTHR30559">
    <property type="entry name" value="FRUCTOSE-BISPHOSPHATE ALDOLASE CLASS 2"/>
    <property type="match status" value="1"/>
</dbReference>
<dbReference type="Pfam" id="PF01116">
    <property type="entry name" value="F_bP_aldolase"/>
    <property type="match status" value="1"/>
</dbReference>
<dbReference type="PIRSF" id="PIRSF001359">
    <property type="entry name" value="F_bP_aldolase_II"/>
    <property type="match status" value="1"/>
</dbReference>
<dbReference type="SUPFAM" id="SSF51569">
    <property type="entry name" value="Aldolase"/>
    <property type="match status" value="1"/>
</dbReference>
<dbReference type="PROSITE" id="PS00602">
    <property type="entry name" value="ALDOLASE_CLASS_II_1"/>
    <property type="match status" value="1"/>
</dbReference>
<dbReference type="PROSITE" id="PS00806">
    <property type="entry name" value="ALDOLASE_CLASS_II_2"/>
    <property type="match status" value="1"/>
</dbReference>
<keyword id="KW-0324">Glycolysis</keyword>
<keyword id="KW-0456">Lyase</keyword>
<keyword id="KW-0479">Metal-binding</keyword>
<keyword id="KW-0862">Zinc</keyword>
<protein>
    <recommendedName>
        <fullName>Fructose-bisphosphate aldolase class 2</fullName>
        <shortName>FBP aldolase</shortName>
        <shortName>FBPA</shortName>
        <ecNumber>4.1.2.13</ecNumber>
    </recommendedName>
    <alternativeName>
        <fullName>Fructose-1,6-bisphosphate aldolase</fullName>
    </alternativeName>
    <alternativeName>
        <fullName>Fructose-bisphosphate aldolase class II</fullName>
    </alternativeName>
</protein>